<gene>
    <name type="primary">inx-19</name>
    <name type="ORF">CBG03987</name>
</gene>
<reference key="1">
    <citation type="journal article" date="2003" name="PLoS Biol.">
        <title>The genome sequence of Caenorhabditis briggsae: a platform for comparative genomics.</title>
        <authorList>
            <person name="Stein L.D."/>
            <person name="Bao Z."/>
            <person name="Blasiar D."/>
            <person name="Blumenthal T."/>
            <person name="Brent M.R."/>
            <person name="Chen N."/>
            <person name="Chinwalla A."/>
            <person name="Clarke L."/>
            <person name="Clee C."/>
            <person name="Coghlan A."/>
            <person name="Coulson A."/>
            <person name="D'Eustachio P."/>
            <person name="Fitch D.H.A."/>
            <person name="Fulton L.A."/>
            <person name="Fulton R.E."/>
            <person name="Griffiths-Jones S."/>
            <person name="Harris T.W."/>
            <person name="Hillier L.W."/>
            <person name="Kamath R."/>
            <person name="Kuwabara P.E."/>
            <person name="Mardis E.R."/>
            <person name="Marra M.A."/>
            <person name="Miner T.L."/>
            <person name="Minx P."/>
            <person name="Mullikin J.C."/>
            <person name="Plumb R.W."/>
            <person name="Rogers J."/>
            <person name="Schein J.E."/>
            <person name="Sohrmann M."/>
            <person name="Spieth J."/>
            <person name="Stajich J.E."/>
            <person name="Wei C."/>
            <person name="Willey D."/>
            <person name="Wilson R.K."/>
            <person name="Durbin R.M."/>
            <person name="Waterston R.H."/>
        </authorList>
    </citation>
    <scope>NUCLEOTIDE SEQUENCE [LARGE SCALE GENOMIC DNA]</scope>
    <source>
        <strain>AF16</strain>
    </source>
</reference>
<proteinExistence type="inferred from homology"/>
<evidence type="ECO:0000250" key="1"/>
<evidence type="ECO:0000255" key="2">
    <source>
        <dbReference type="PROSITE-ProRule" id="PRU00351"/>
    </source>
</evidence>
<keyword id="KW-0965">Cell junction</keyword>
<keyword id="KW-1003">Cell membrane</keyword>
<keyword id="KW-0217">Developmental protein</keyword>
<keyword id="KW-0221">Differentiation</keyword>
<keyword id="KW-0303">Gap junction</keyword>
<keyword id="KW-0407">Ion channel</keyword>
<keyword id="KW-0406">Ion transport</keyword>
<keyword id="KW-0472">Membrane</keyword>
<keyword id="KW-0524">Neurogenesis</keyword>
<keyword id="KW-1185">Reference proteome</keyword>
<keyword id="KW-0812">Transmembrane</keyword>
<keyword id="KW-1133">Transmembrane helix</keyword>
<keyword id="KW-0813">Transport</keyword>
<name>INX19_CAEBR</name>
<dbReference type="EMBL" id="HE600906">
    <property type="protein sequence ID" value="CAP24786.2"/>
    <property type="molecule type" value="Genomic_DNA"/>
</dbReference>
<dbReference type="SMR" id="A8WVX4"/>
<dbReference type="FunCoup" id="A8WVX4">
    <property type="interactions" value="168"/>
</dbReference>
<dbReference type="STRING" id="6238.A8WVX4"/>
<dbReference type="WormBase" id="CBG03987">
    <property type="protein sequence ID" value="CBP47099"/>
    <property type="gene ID" value="WBGene00026740"/>
    <property type="gene designation" value="Cbr-inx-19"/>
</dbReference>
<dbReference type="eggNOG" id="ENOG502SSX3">
    <property type="taxonomic scope" value="Eukaryota"/>
</dbReference>
<dbReference type="HOGENOM" id="CLU_035763_0_1_1"/>
<dbReference type="InParanoid" id="A8WVX4"/>
<dbReference type="OMA" id="WQSGLNI"/>
<dbReference type="Proteomes" id="UP000008549">
    <property type="component" value="Unassembled WGS sequence"/>
</dbReference>
<dbReference type="GO" id="GO:0005921">
    <property type="term" value="C:gap junction"/>
    <property type="evidence" value="ECO:0000250"/>
    <property type="project" value="UniProtKB"/>
</dbReference>
<dbReference type="GO" id="GO:0005886">
    <property type="term" value="C:plasma membrane"/>
    <property type="evidence" value="ECO:0000250"/>
    <property type="project" value="UniProtKB"/>
</dbReference>
<dbReference type="GO" id="GO:0005243">
    <property type="term" value="F:gap junction channel activity"/>
    <property type="evidence" value="ECO:0000250"/>
    <property type="project" value="UniProtKB"/>
</dbReference>
<dbReference type="GO" id="GO:0055077">
    <property type="term" value="F:gap junction hemi-channel activity"/>
    <property type="evidence" value="ECO:0000250"/>
    <property type="project" value="UniProtKB"/>
</dbReference>
<dbReference type="GO" id="GO:0030154">
    <property type="term" value="P:cell differentiation"/>
    <property type="evidence" value="ECO:0007669"/>
    <property type="project" value="UniProtKB-KW"/>
</dbReference>
<dbReference type="GO" id="GO:0034220">
    <property type="term" value="P:monoatomic ion transmembrane transport"/>
    <property type="evidence" value="ECO:0007669"/>
    <property type="project" value="UniProtKB-KW"/>
</dbReference>
<dbReference type="GO" id="GO:0007399">
    <property type="term" value="P:nervous system development"/>
    <property type="evidence" value="ECO:0007669"/>
    <property type="project" value="UniProtKB-KW"/>
</dbReference>
<dbReference type="InterPro" id="IPR000990">
    <property type="entry name" value="Innexin"/>
</dbReference>
<dbReference type="PANTHER" id="PTHR11893">
    <property type="entry name" value="INNEXIN"/>
    <property type="match status" value="1"/>
</dbReference>
<dbReference type="PANTHER" id="PTHR11893:SF24">
    <property type="entry name" value="INNEXIN-19"/>
    <property type="match status" value="1"/>
</dbReference>
<dbReference type="Pfam" id="PF00876">
    <property type="entry name" value="Innexin"/>
    <property type="match status" value="1"/>
</dbReference>
<dbReference type="PRINTS" id="PR01262">
    <property type="entry name" value="INNEXIN"/>
</dbReference>
<dbReference type="PROSITE" id="PS51013">
    <property type="entry name" value="PANNEXIN"/>
    <property type="match status" value="1"/>
</dbReference>
<accession>A8WVX4</accession>
<sequence>MFFHATLARSFISALSVRGDDDAVDRLNYYYTPLILAVCCLVISAKQYGGTPIECWVNPHSRESMEEYIESYCWIQNTYWIPMYENVPDDHTAREEKQIGYYQWVPFILIAEALMFSLPCIFWRLCSFQSGLNIQTLINAACDAQALLDYSDRQKAVEAITCNFVDNLDLQSPNGRIRARGWIARIKFSRFLSGQCISIVYSFTKLLYSVNVVAQFFILNACLKSSEFVFFGFQVLSDIWAGRPWTETGHFPRVTLCDFEVRYLANLNRYTVQCALLINIINEKVFAFLWCWYMILAIITTCSFIYWIANSFIHSEKVDYVMKFIQIAESSEYKKLQKFEKDATVERLYTVIAFAPHLLDSFVSDFLKSDGILMLRMISNHAGDMIVVQLVRNLWQEYRERNWREFEEHEEMKDVEMRRIQGTRERIVIANPGQTKSFL</sequence>
<feature type="chain" id="PRO_0000341371" description="Innexin-19">
    <location>
        <begin position="1"/>
        <end position="439"/>
    </location>
</feature>
<feature type="transmembrane region" description="Helical" evidence="2">
    <location>
        <begin position="33"/>
        <end position="53"/>
    </location>
</feature>
<feature type="transmembrane region" description="Helical" evidence="2">
    <location>
        <begin position="103"/>
        <end position="123"/>
    </location>
</feature>
<feature type="transmembrane region" description="Helical" evidence="2">
    <location>
        <begin position="199"/>
        <end position="219"/>
    </location>
</feature>
<feature type="transmembrane region" description="Helical" evidence="2">
    <location>
        <begin position="285"/>
        <end position="305"/>
    </location>
</feature>
<organism>
    <name type="scientific">Caenorhabditis briggsae</name>
    <dbReference type="NCBI Taxonomy" id="6238"/>
    <lineage>
        <taxon>Eukaryota</taxon>
        <taxon>Metazoa</taxon>
        <taxon>Ecdysozoa</taxon>
        <taxon>Nematoda</taxon>
        <taxon>Chromadorea</taxon>
        <taxon>Rhabditida</taxon>
        <taxon>Rhabditina</taxon>
        <taxon>Rhabditomorpha</taxon>
        <taxon>Rhabditoidea</taxon>
        <taxon>Rhabditidae</taxon>
        <taxon>Peloderinae</taxon>
        <taxon>Caenorhabditis</taxon>
    </lineage>
</organism>
<comment type="function">
    <text evidence="1">Structural component of the gap junctions that specifically coordinates left-right asymmetry in the developing nervous system. Acts by forming gap junction network linking embryonic neurons and providing electrical coupling between cells, leading to promote or inhibit AWC signaling (By similarity).</text>
</comment>
<comment type="subcellular location">
    <subcellularLocation>
        <location>Cell membrane</location>
        <topology>Multi-pass membrane protein</topology>
    </subcellularLocation>
    <subcellularLocation>
        <location evidence="1">Cell junction</location>
        <location evidence="1">Gap junction</location>
    </subcellularLocation>
</comment>
<comment type="similarity">
    <text evidence="2">Belongs to the pannexin family.</text>
</comment>
<protein>
    <recommendedName>
        <fullName>Innexin-19</fullName>
    </recommendedName>
</protein>